<gene>
    <name evidence="1" type="primary">tgt</name>
    <name type="ordered locus">PMM0271</name>
</gene>
<protein>
    <recommendedName>
        <fullName evidence="1">Queuine tRNA-ribosyltransferase</fullName>
        <ecNumber evidence="1">2.4.2.29</ecNumber>
    </recommendedName>
    <alternativeName>
        <fullName evidence="1">Guanine insertion enzyme</fullName>
    </alternativeName>
    <alternativeName>
        <fullName evidence="1">tRNA-guanine transglycosylase</fullName>
    </alternativeName>
</protein>
<sequence>MFEFEIKSNCSNTEARTGIFHTPNGQVNTPRFMPVGTLATVKGISSEQLISTGSEMILSNTFHLHLQPGEKLVKESGGIHKFMNWDKPILTDSGGYQVFSLAKLNNISDKGVEFRNPRDGSHVFLSPEKVMQIQMDLGSDVAMAFDHCPPHTANENDIEDSLERTHSWLQKCVETHQKSNQALFGIVQGGKYPRLREHSAKFTSSFDLPGIAVGGVSVGEAVEEIHSVINNVPKFLPINKPRYLMGIGSLREISLAVAKGFDIFDCVLPTRLGRHGTAFFNDERWNIRNARFKNDFSPIDKTCKCETCKSYSRAYLHHLVRNDEILGLTLISLHNISHLIRFTNAISAAIKDNCFTIDFAPWKRSSIAHHTW</sequence>
<reference key="1">
    <citation type="journal article" date="2003" name="Nature">
        <title>Genome divergence in two Prochlorococcus ecotypes reflects oceanic niche differentiation.</title>
        <authorList>
            <person name="Rocap G."/>
            <person name="Larimer F.W."/>
            <person name="Lamerdin J.E."/>
            <person name="Malfatti S."/>
            <person name="Chain P."/>
            <person name="Ahlgren N.A."/>
            <person name="Arellano A."/>
            <person name="Coleman M."/>
            <person name="Hauser L."/>
            <person name="Hess W.R."/>
            <person name="Johnson Z.I."/>
            <person name="Land M.L."/>
            <person name="Lindell D."/>
            <person name="Post A.F."/>
            <person name="Regala W."/>
            <person name="Shah M."/>
            <person name="Shaw S.L."/>
            <person name="Steglich C."/>
            <person name="Sullivan M.B."/>
            <person name="Ting C.S."/>
            <person name="Tolonen A."/>
            <person name="Webb E.A."/>
            <person name="Zinser E.R."/>
            <person name="Chisholm S.W."/>
        </authorList>
    </citation>
    <scope>NUCLEOTIDE SEQUENCE [LARGE SCALE GENOMIC DNA]</scope>
    <source>
        <strain>CCMP1986 / NIES-2087 / MED4</strain>
    </source>
</reference>
<organism>
    <name type="scientific">Prochlorococcus marinus subsp. pastoris (strain CCMP1986 / NIES-2087 / MED4)</name>
    <dbReference type="NCBI Taxonomy" id="59919"/>
    <lineage>
        <taxon>Bacteria</taxon>
        <taxon>Bacillati</taxon>
        <taxon>Cyanobacteriota</taxon>
        <taxon>Cyanophyceae</taxon>
        <taxon>Synechococcales</taxon>
        <taxon>Prochlorococcaceae</taxon>
        <taxon>Prochlorococcus</taxon>
    </lineage>
</organism>
<evidence type="ECO:0000255" key="1">
    <source>
        <dbReference type="HAMAP-Rule" id="MF_00168"/>
    </source>
</evidence>
<name>TGT_PROMP</name>
<dbReference type="EC" id="2.4.2.29" evidence="1"/>
<dbReference type="EMBL" id="BX548174">
    <property type="protein sequence ID" value="CAE18730.1"/>
    <property type="molecule type" value="Genomic_DNA"/>
</dbReference>
<dbReference type="RefSeq" id="WP_011131908.1">
    <property type="nucleotide sequence ID" value="NC_005072.1"/>
</dbReference>
<dbReference type="SMR" id="Q7TUG0"/>
<dbReference type="STRING" id="59919.PMM0271"/>
<dbReference type="KEGG" id="pmm:PMM0271"/>
<dbReference type="eggNOG" id="COG0343">
    <property type="taxonomic scope" value="Bacteria"/>
</dbReference>
<dbReference type="HOGENOM" id="CLU_022060_0_1_3"/>
<dbReference type="OrthoDB" id="9805417at2"/>
<dbReference type="UniPathway" id="UPA00392"/>
<dbReference type="Proteomes" id="UP000001026">
    <property type="component" value="Chromosome"/>
</dbReference>
<dbReference type="GO" id="GO:0005829">
    <property type="term" value="C:cytosol"/>
    <property type="evidence" value="ECO:0007669"/>
    <property type="project" value="TreeGrafter"/>
</dbReference>
<dbReference type="GO" id="GO:0046872">
    <property type="term" value="F:metal ion binding"/>
    <property type="evidence" value="ECO:0007669"/>
    <property type="project" value="UniProtKB-KW"/>
</dbReference>
<dbReference type="GO" id="GO:0008479">
    <property type="term" value="F:tRNA-guanosine(34) queuine transglycosylase activity"/>
    <property type="evidence" value="ECO:0007669"/>
    <property type="project" value="UniProtKB-UniRule"/>
</dbReference>
<dbReference type="GO" id="GO:0008616">
    <property type="term" value="P:queuosine biosynthetic process"/>
    <property type="evidence" value="ECO:0007669"/>
    <property type="project" value="UniProtKB-UniRule"/>
</dbReference>
<dbReference type="GO" id="GO:0002099">
    <property type="term" value="P:tRNA wobble guanine modification"/>
    <property type="evidence" value="ECO:0007669"/>
    <property type="project" value="TreeGrafter"/>
</dbReference>
<dbReference type="GO" id="GO:0101030">
    <property type="term" value="P:tRNA-guanine transglycosylation"/>
    <property type="evidence" value="ECO:0007669"/>
    <property type="project" value="InterPro"/>
</dbReference>
<dbReference type="Gene3D" id="3.20.20.105">
    <property type="entry name" value="Queuine tRNA-ribosyltransferase-like"/>
    <property type="match status" value="1"/>
</dbReference>
<dbReference type="HAMAP" id="MF_00168">
    <property type="entry name" value="Q_tRNA_Tgt"/>
    <property type="match status" value="1"/>
</dbReference>
<dbReference type="InterPro" id="IPR050076">
    <property type="entry name" value="ArchSynthase1/Queuine_TRR"/>
</dbReference>
<dbReference type="InterPro" id="IPR004803">
    <property type="entry name" value="TGT"/>
</dbReference>
<dbReference type="InterPro" id="IPR036511">
    <property type="entry name" value="TGT-like_sf"/>
</dbReference>
<dbReference type="InterPro" id="IPR002616">
    <property type="entry name" value="tRNA_ribo_trans-like"/>
</dbReference>
<dbReference type="NCBIfam" id="TIGR00430">
    <property type="entry name" value="Q_tRNA_tgt"/>
    <property type="match status" value="1"/>
</dbReference>
<dbReference type="NCBIfam" id="TIGR00449">
    <property type="entry name" value="tgt_general"/>
    <property type="match status" value="1"/>
</dbReference>
<dbReference type="PANTHER" id="PTHR46499">
    <property type="entry name" value="QUEUINE TRNA-RIBOSYLTRANSFERASE"/>
    <property type="match status" value="1"/>
</dbReference>
<dbReference type="PANTHER" id="PTHR46499:SF1">
    <property type="entry name" value="QUEUINE TRNA-RIBOSYLTRANSFERASE"/>
    <property type="match status" value="1"/>
</dbReference>
<dbReference type="Pfam" id="PF01702">
    <property type="entry name" value="TGT"/>
    <property type="match status" value="1"/>
</dbReference>
<dbReference type="SUPFAM" id="SSF51713">
    <property type="entry name" value="tRNA-guanine transglycosylase"/>
    <property type="match status" value="1"/>
</dbReference>
<keyword id="KW-0328">Glycosyltransferase</keyword>
<keyword id="KW-0479">Metal-binding</keyword>
<keyword id="KW-0671">Queuosine biosynthesis</keyword>
<keyword id="KW-0808">Transferase</keyword>
<keyword id="KW-0819">tRNA processing</keyword>
<keyword id="KW-0862">Zinc</keyword>
<comment type="function">
    <text evidence="1">Catalyzes the base-exchange of a guanine (G) residue with the queuine precursor 7-aminomethyl-7-deazaguanine (PreQ1) at position 34 (anticodon wobble position) in tRNAs with GU(N) anticodons (tRNA-Asp, -Asn, -His and -Tyr). Catalysis occurs through a double-displacement mechanism. The nucleophile active site attacks the C1' of nucleotide 34 to detach the guanine base from the RNA, forming a covalent enzyme-RNA intermediate. The proton acceptor active site deprotonates the incoming PreQ1, allowing a nucleophilic attack on the C1' of the ribose to form the product. After dissociation, two additional enzymatic reactions on the tRNA convert PreQ1 to queuine (Q), resulting in the hypermodified nucleoside queuosine (7-(((4,5-cis-dihydroxy-2-cyclopenten-1-yl)amino)methyl)-7-deazaguanosine).</text>
</comment>
<comment type="catalytic activity">
    <reaction evidence="1">
        <text>7-aminomethyl-7-carbaguanine + guanosine(34) in tRNA = 7-aminomethyl-7-carbaguanosine(34) in tRNA + guanine</text>
        <dbReference type="Rhea" id="RHEA:24104"/>
        <dbReference type="Rhea" id="RHEA-COMP:10341"/>
        <dbReference type="Rhea" id="RHEA-COMP:10342"/>
        <dbReference type="ChEBI" id="CHEBI:16235"/>
        <dbReference type="ChEBI" id="CHEBI:58703"/>
        <dbReference type="ChEBI" id="CHEBI:74269"/>
        <dbReference type="ChEBI" id="CHEBI:82833"/>
        <dbReference type="EC" id="2.4.2.29"/>
    </reaction>
</comment>
<comment type="cofactor">
    <cofactor evidence="1">
        <name>Zn(2+)</name>
        <dbReference type="ChEBI" id="CHEBI:29105"/>
    </cofactor>
    <text evidence="1">Binds 1 zinc ion per subunit.</text>
</comment>
<comment type="pathway">
    <text evidence="1">tRNA modification; tRNA-queuosine biosynthesis.</text>
</comment>
<comment type="subunit">
    <text evidence="1">Homodimer. Within each dimer, one monomer is responsible for RNA recognition and catalysis, while the other monomer binds to the replacement base PreQ1.</text>
</comment>
<comment type="similarity">
    <text evidence="1">Belongs to the queuine tRNA-ribosyltransferase family.</text>
</comment>
<accession>Q7TUG0</accession>
<feature type="chain" id="PRO_0000135505" description="Queuine tRNA-ribosyltransferase">
    <location>
        <begin position="1"/>
        <end position="372"/>
    </location>
</feature>
<feature type="region of interest" description="RNA binding" evidence="1">
    <location>
        <begin position="246"/>
        <end position="252"/>
    </location>
</feature>
<feature type="region of interest" description="RNA binding; important for wobble base 34 recognition" evidence="1">
    <location>
        <begin position="270"/>
        <end position="274"/>
    </location>
</feature>
<feature type="active site" description="Proton acceptor" evidence="1">
    <location>
        <position position="92"/>
    </location>
</feature>
<feature type="active site" description="Nucleophile" evidence="1">
    <location>
        <position position="265"/>
    </location>
</feature>
<feature type="binding site" evidence="1">
    <location>
        <begin position="92"/>
        <end position="96"/>
    </location>
    <ligand>
        <name>substrate</name>
    </ligand>
</feature>
<feature type="binding site" evidence="1">
    <location>
        <position position="146"/>
    </location>
    <ligand>
        <name>substrate</name>
    </ligand>
</feature>
<feature type="binding site" evidence="1">
    <location>
        <position position="188"/>
    </location>
    <ligand>
        <name>substrate</name>
    </ligand>
</feature>
<feature type="binding site" evidence="1">
    <location>
        <position position="215"/>
    </location>
    <ligand>
        <name>substrate</name>
    </ligand>
</feature>
<feature type="binding site" evidence="1">
    <location>
        <position position="303"/>
    </location>
    <ligand>
        <name>Zn(2+)</name>
        <dbReference type="ChEBI" id="CHEBI:29105"/>
    </ligand>
</feature>
<feature type="binding site" evidence="1">
    <location>
        <position position="305"/>
    </location>
    <ligand>
        <name>Zn(2+)</name>
        <dbReference type="ChEBI" id="CHEBI:29105"/>
    </ligand>
</feature>
<feature type="binding site" evidence="1">
    <location>
        <position position="308"/>
    </location>
    <ligand>
        <name>Zn(2+)</name>
        <dbReference type="ChEBI" id="CHEBI:29105"/>
    </ligand>
</feature>
<feature type="binding site" evidence="1">
    <location>
        <position position="334"/>
    </location>
    <ligand>
        <name>Zn(2+)</name>
        <dbReference type="ChEBI" id="CHEBI:29105"/>
    </ligand>
</feature>
<proteinExistence type="inferred from homology"/>